<evidence type="ECO:0000255" key="1"/>
<evidence type="ECO:0000305" key="2"/>
<organism>
    <name type="scientific">Methanocaldococcus jannaschii (strain ATCC 43067 / DSM 2661 / JAL-1 / JCM 10045 / NBRC 100440)</name>
    <name type="common">Methanococcus jannaschii</name>
    <dbReference type="NCBI Taxonomy" id="243232"/>
    <lineage>
        <taxon>Archaea</taxon>
        <taxon>Methanobacteriati</taxon>
        <taxon>Methanobacteriota</taxon>
        <taxon>Methanomada group</taxon>
        <taxon>Methanococci</taxon>
        <taxon>Methanococcales</taxon>
        <taxon>Methanocaldococcaceae</taxon>
        <taxon>Methanocaldococcus</taxon>
    </lineage>
</organism>
<proteinExistence type="inferred from homology"/>
<protein>
    <recommendedName>
        <fullName>Probable membrane transporter protein MJ0441</fullName>
    </recommendedName>
</protein>
<gene>
    <name type="ordered locus">MJ0441</name>
</gene>
<feature type="chain" id="PRO_0000106878" description="Probable membrane transporter protein MJ0441">
    <location>
        <begin position="1"/>
        <end position="267"/>
    </location>
</feature>
<feature type="transmembrane region" description="Helical" evidence="1">
    <location>
        <begin position="10"/>
        <end position="30"/>
    </location>
</feature>
<feature type="transmembrane region" description="Helical" evidence="1">
    <location>
        <begin position="31"/>
        <end position="51"/>
    </location>
</feature>
<feature type="transmembrane region" description="Helical" evidence="1">
    <location>
        <begin position="55"/>
        <end position="75"/>
    </location>
</feature>
<feature type="transmembrane region" description="Helical" evidence="1">
    <location>
        <begin position="87"/>
        <end position="107"/>
    </location>
</feature>
<feature type="transmembrane region" description="Helical" evidence="1">
    <location>
        <begin position="158"/>
        <end position="178"/>
    </location>
</feature>
<feature type="transmembrane region" description="Helical" evidence="1">
    <location>
        <begin position="185"/>
        <end position="205"/>
    </location>
</feature>
<feature type="transmembrane region" description="Helical" evidence="1">
    <location>
        <begin position="213"/>
        <end position="233"/>
    </location>
</feature>
<reference key="1">
    <citation type="journal article" date="1996" name="Science">
        <title>Complete genome sequence of the methanogenic archaeon, Methanococcus jannaschii.</title>
        <authorList>
            <person name="Bult C.J."/>
            <person name="White O."/>
            <person name="Olsen G.J."/>
            <person name="Zhou L."/>
            <person name="Fleischmann R.D."/>
            <person name="Sutton G.G."/>
            <person name="Blake J.A."/>
            <person name="FitzGerald L.M."/>
            <person name="Clayton R.A."/>
            <person name="Gocayne J.D."/>
            <person name="Kerlavage A.R."/>
            <person name="Dougherty B.A."/>
            <person name="Tomb J.-F."/>
            <person name="Adams M.D."/>
            <person name="Reich C.I."/>
            <person name="Overbeek R."/>
            <person name="Kirkness E.F."/>
            <person name="Weinstock K.G."/>
            <person name="Merrick J.M."/>
            <person name="Glodek A."/>
            <person name="Scott J.L."/>
            <person name="Geoghagen N.S.M."/>
            <person name="Weidman J.F."/>
            <person name="Fuhrmann J.L."/>
            <person name="Nguyen D."/>
            <person name="Utterback T.R."/>
            <person name="Kelley J.M."/>
            <person name="Peterson J.D."/>
            <person name="Sadow P.W."/>
            <person name="Hanna M.C."/>
            <person name="Cotton M.D."/>
            <person name="Roberts K.M."/>
            <person name="Hurst M.A."/>
            <person name="Kaine B.P."/>
            <person name="Borodovsky M."/>
            <person name="Klenk H.-P."/>
            <person name="Fraser C.M."/>
            <person name="Smith H.O."/>
            <person name="Woese C.R."/>
            <person name="Venter J.C."/>
        </authorList>
    </citation>
    <scope>NUCLEOTIDE SEQUENCE [LARGE SCALE GENOMIC DNA]</scope>
    <source>
        <strain>ATCC 43067 / DSM 2661 / JAL-1 / JCM 10045 / NBRC 100440</strain>
    </source>
</reference>
<comment type="subcellular location">
    <subcellularLocation>
        <location evidence="2">Cell membrane</location>
        <topology evidence="2">Multi-pass membrane protein</topology>
    </subcellularLocation>
</comment>
<comment type="similarity">
    <text evidence="2">Belongs to the 4-toluene sulfonate uptake permease (TSUP) (TC 2.A.102) family.</text>
</comment>
<accession>Q57883</accession>
<keyword id="KW-1003">Cell membrane</keyword>
<keyword id="KW-0472">Membrane</keyword>
<keyword id="KW-1185">Reference proteome</keyword>
<keyword id="KW-0812">Transmembrane</keyword>
<keyword id="KW-1133">Transmembrane helix</keyword>
<keyword id="KW-0813">Transport</keyword>
<dbReference type="EMBL" id="L77117">
    <property type="protein sequence ID" value="AAB98428.1"/>
    <property type="molecule type" value="Genomic_DNA"/>
</dbReference>
<dbReference type="PIR" id="A64355">
    <property type="entry name" value="A64355"/>
</dbReference>
<dbReference type="FunCoup" id="Q57883">
    <property type="interactions" value="2"/>
</dbReference>
<dbReference type="STRING" id="243232.MJ_0441"/>
<dbReference type="PaxDb" id="243232-MJ_0441"/>
<dbReference type="EnsemblBacteria" id="AAB98428">
    <property type="protein sequence ID" value="AAB98428"/>
    <property type="gene ID" value="MJ_0441"/>
</dbReference>
<dbReference type="KEGG" id="mja:MJ_0441"/>
<dbReference type="eggNOG" id="arCOG02050">
    <property type="taxonomic scope" value="Archaea"/>
</dbReference>
<dbReference type="HOGENOM" id="CLU_045498_6_0_2"/>
<dbReference type="InParanoid" id="Q57883"/>
<dbReference type="OrthoDB" id="60523at2157"/>
<dbReference type="PhylomeDB" id="Q57883"/>
<dbReference type="Proteomes" id="UP000000805">
    <property type="component" value="Chromosome"/>
</dbReference>
<dbReference type="GO" id="GO:0005886">
    <property type="term" value="C:plasma membrane"/>
    <property type="evidence" value="ECO:0007669"/>
    <property type="project" value="UniProtKB-SubCell"/>
</dbReference>
<dbReference type="InterPro" id="IPR002781">
    <property type="entry name" value="TM_pro_TauE-like"/>
</dbReference>
<dbReference type="InterPro" id="IPR051598">
    <property type="entry name" value="TSUP/Inactive_protease-like"/>
</dbReference>
<dbReference type="PANTHER" id="PTHR43701">
    <property type="entry name" value="MEMBRANE TRANSPORTER PROTEIN MJ0441-RELATED"/>
    <property type="match status" value="1"/>
</dbReference>
<dbReference type="PANTHER" id="PTHR43701:SF2">
    <property type="entry name" value="MEMBRANE TRANSPORTER PROTEIN YJNA-RELATED"/>
    <property type="match status" value="1"/>
</dbReference>
<dbReference type="Pfam" id="PF01925">
    <property type="entry name" value="TauE"/>
    <property type="match status" value="1"/>
</dbReference>
<sequence length="267" mass="28980">MVIKLEFEFLLLLPLLIIVGFIVGILGSLFGIGGGFLVAPILTFIFDYFGIPDGVKFAVGTSLFVVFINSIISIFRHAKIKNINWKASITIGIISLVFSYFSGFLVVNFIDSAILKKLFGIFLIANAIYMAKSHHIDKISDREDKLEPFILCGVITGFLSGLFGIGGGIVIIPILAMAKYPVKRAVAISVGVIPLTSIGGLISYLTANTEGYIYNIGYVSIPIALIMAIPIIYSSKLGIKINQKISPKHLRIMLSSILGVMGLFMLL</sequence>
<name>Y441_METJA</name>